<sequence>GLLQTIKEKLKEFAGGVVTGVQS</sequence>
<name>AUR42_RANAE</name>
<proteinExistence type="evidence at protein level"/>
<protein>
    <recommendedName>
        <fullName>Aurein-4.2</fullName>
    </recommendedName>
</protein>
<reference key="1">
    <citation type="journal article" date="2000" name="Eur. J. Biochem.">
        <title>The antibiotic and anticancer active aurein peptides from the australian bell frogs Litoria aurea and Litoria raniformis the solution structure of aurein 1.2.</title>
        <authorList>
            <person name="Rozek T."/>
            <person name="Wegener K.L."/>
            <person name="Bowie J.H."/>
            <person name="Olver I.N."/>
            <person name="Carver J.A."/>
            <person name="Wallace J.C."/>
            <person name="Tyler M.J."/>
        </authorList>
    </citation>
    <scope>PROTEIN SEQUENCE</scope>
    <scope>FUNCTION</scope>
    <source>
        <tissue>Skin secretion</tissue>
    </source>
</reference>
<evidence type="ECO:0000269" key="1">
    <source>
    </source>
</evidence>
<evidence type="ECO:0000305" key="2"/>
<feature type="peptide" id="PRO_0000043728" description="Aurein-4.2">
    <location>
        <begin position="1"/>
        <end position="23"/>
    </location>
</feature>
<keyword id="KW-0878">Amphibian defense peptide</keyword>
<keyword id="KW-0903">Direct protein sequencing</keyword>
<keyword id="KW-0964">Secreted</keyword>
<dbReference type="GO" id="GO:0005576">
    <property type="term" value="C:extracellular region"/>
    <property type="evidence" value="ECO:0007669"/>
    <property type="project" value="UniProtKB-SubCell"/>
</dbReference>
<dbReference type="GO" id="GO:0016714">
    <property type="term" value="F:oxidoreductase activity, acting on paired donors, with incorporation or reduction of molecular oxygen, reduced pteridine as one donor, and incorporation of one atom of oxygen"/>
    <property type="evidence" value="ECO:0007669"/>
    <property type="project" value="InterPro"/>
</dbReference>
<dbReference type="GO" id="GO:0006952">
    <property type="term" value="P:defense response"/>
    <property type="evidence" value="ECO:0007669"/>
    <property type="project" value="UniProtKB-KW"/>
</dbReference>
<dbReference type="InterPro" id="IPR019774">
    <property type="entry name" value="Aromatic-AA_hydroxylase_C"/>
</dbReference>
<dbReference type="PROSITE" id="PS51410">
    <property type="entry name" value="BH4_AAA_HYDROXYL_2"/>
    <property type="match status" value="1"/>
</dbReference>
<organism>
    <name type="scientific">Ranoidea aurea</name>
    <name type="common">Green and golden bell frog</name>
    <name type="synonym">Litoria aurea</name>
    <dbReference type="NCBI Taxonomy" id="8371"/>
    <lineage>
        <taxon>Eukaryota</taxon>
        <taxon>Metazoa</taxon>
        <taxon>Chordata</taxon>
        <taxon>Craniata</taxon>
        <taxon>Vertebrata</taxon>
        <taxon>Euteleostomi</taxon>
        <taxon>Amphibia</taxon>
        <taxon>Batrachia</taxon>
        <taxon>Anura</taxon>
        <taxon>Neobatrachia</taxon>
        <taxon>Hyloidea</taxon>
        <taxon>Hylidae</taxon>
        <taxon>Pelodryadinae</taxon>
        <taxon>Ranoidea</taxon>
    </lineage>
</organism>
<accession>P69025</accession>
<accession>P82398</accession>
<comment type="function">
    <text evidence="1">Has no antimicrobial or anticancer activity.</text>
</comment>
<comment type="subcellular location">
    <subcellularLocation>
        <location>Secreted</location>
    </subcellularLocation>
</comment>
<comment type="tissue specificity">
    <text>Expressed by the skin dorsal glands.</text>
</comment>
<comment type="similarity">
    <text evidence="2">Belongs to the frog skin active peptide (FSAP) family. Aurein subfamily.</text>
</comment>